<proteinExistence type="inferred from homology"/>
<sequence length="189" mass="20554">MPRPENPIQLAVIGAAHGTRGEVRVKTFTGDPLAIADYGLLYDEQGKAYEILEARVAKTVVIVRFKGVNDRNAAEALNGTELFIDRSQLPDEELDEDEFFQTDLIGLEAVDGDGKSYGVVSAIFDFGGGDLIELSEKGKRPMLIPFTEAAVPEIDFDKGIIKVEPHAAGLIADEHDNPPHESGKKPKKP</sequence>
<protein>
    <recommendedName>
        <fullName evidence="1">Ribosome maturation factor RimM</fullName>
    </recommendedName>
</protein>
<evidence type="ECO:0000255" key="1">
    <source>
        <dbReference type="HAMAP-Rule" id="MF_00014"/>
    </source>
</evidence>
<evidence type="ECO:0000256" key="2">
    <source>
        <dbReference type="SAM" id="MobiDB-lite"/>
    </source>
</evidence>
<reference key="1">
    <citation type="submission" date="2007-10" db="EMBL/GenBank/DDBJ databases">
        <title>Brucella canis ATCC 23365 whole genome shotgun sequencing project.</title>
        <authorList>
            <person name="Setubal J.C."/>
            <person name="Bowns C."/>
            <person name="Boyle S."/>
            <person name="Crasta O.R."/>
            <person name="Czar M.J."/>
            <person name="Dharmanolla C."/>
            <person name="Gillespie J.J."/>
            <person name="Kenyon R.W."/>
            <person name="Lu J."/>
            <person name="Mane S."/>
            <person name="Mohapatra S."/>
            <person name="Nagrani S."/>
            <person name="Purkayastha A."/>
            <person name="Rajasimha H.K."/>
            <person name="Shallom J.M."/>
            <person name="Shallom S."/>
            <person name="Shukla M."/>
            <person name="Snyder E.E."/>
            <person name="Sobral B.W."/>
            <person name="Wattam A.R."/>
            <person name="Will R."/>
            <person name="Williams K."/>
            <person name="Yoo H."/>
            <person name="Bruce D."/>
            <person name="Detter C."/>
            <person name="Munk C."/>
            <person name="Brettin T.S."/>
        </authorList>
    </citation>
    <scope>NUCLEOTIDE SEQUENCE [LARGE SCALE GENOMIC DNA]</scope>
    <source>
        <strain>ATCC 23365 / NCTC 10854 / RM-666</strain>
    </source>
</reference>
<comment type="function">
    <text evidence="1">An accessory protein needed during the final step in the assembly of 30S ribosomal subunit, possibly for assembly of the head region. Essential for efficient processing of 16S rRNA. May be needed both before and after RbfA during the maturation of 16S rRNA. It has affinity for free ribosomal 30S subunits but not for 70S ribosomes.</text>
</comment>
<comment type="subunit">
    <text evidence="1">Binds ribosomal protein uS19.</text>
</comment>
<comment type="subcellular location">
    <subcellularLocation>
        <location evidence="1">Cytoplasm</location>
    </subcellularLocation>
</comment>
<comment type="domain">
    <text evidence="1">The PRC barrel domain binds ribosomal protein uS19.</text>
</comment>
<comment type="similarity">
    <text evidence="1">Belongs to the RimM family.</text>
</comment>
<feature type="chain" id="PRO_1000074020" description="Ribosome maturation factor RimM">
    <location>
        <begin position="1"/>
        <end position="189"/>
    </location>
</feature>
<feature type="domain" description="PRC barrel" evidence="1">
    <location>
        <begin position="96"/>
        <end position="169"/>
    </location>
</feature>
<feature type="region of interest" description="Disordered" evidence="2">
    <location>
        <begin position="168"/>
        <end position="189"/>
    </location>
</feature>
<feature type="compositionally biased region" description="Basic and acidic residues" evidence="2">
    <location>
        <begin position="172"/>
        <end position="189"/>
    </location>
</feature>
<dbReference type="EMBL" id="CP000872">
    <property type="protein sequence ID" value="ABX62949.1"/>
    <property type="molecule type" value="Genomic_DNA"/>
</dbReference>
<dbReference type="RefSeq" id="WP_002964983.1">
    <property type="nucleotide sequence ID" value="NC_010103.1"/>
</dbReference>
<dbReference type="SMR" id="A9M8Q1"/>
<dbReference type="GeneID" id="93017753"/>
<dbReference type="KEGG" id="bcs:BCAN_A1959"/>
<dbReference type="HOGENOM" id="CLU_077636_0_1_5"/>
<dbReference type="PhylomeDB" id="A9M8Q1"/>
<dbReference type="Proteomes" id="UP000001385">
    <property type="component" value="Chromosome I"/>
</dbReference>
<dbReference type="GO" id="GO:0005737">
    <property type="term" value="C:cytoplasm"/>
    <property type="evidence" value="ECO:0007669"/>
    <property type="project" value="UniProtKB-SubCell"/>
</dbReference>
<dbReference type="GO" id="GO:0005840">
    <property type="term" value="C:ribosome"/>
    <property type="evidence" value="ECO:0007669"/>
    <property type="project" value="InterPro"/>
</dbReference>
<dbReference type="GO" id="GO:0043022">
    <property type="term" value="F:ribosome binding"/>
    <property type="evidence" value="ECO:0007669"/>
    <property type="project" value="InterPro"/>
</dbReference>
<dbReference type="GO" id="GO:0042274">
    <property type="term" value="P:ribosomal small subunit biogenesis"/>
    <property type="evidence" value="ECO:0007669"/>
    <property type="project" value="UniProtKB-UniRule"/>
</dbReference>
<dbReference type="GO" id="GO:0006364">
    <property type="term" value="P:rRNA processing"/>
    <property type="evidence" value="ECO:0007669"/>
    <property type="project" value="UniProtKB-UniRule"/>
</dbReference>
<dbReference type="Gene3D" id="2.30.30.240">
    <property type="entry name" value="PRC-barrel domain"/>
    <property type="match status" value="1"/>
</dbReference>
<dbReference type="Gene3D" id="2.40.30.60">
    <property type="entry name" value="RimM"/>
    <property type="match status" value="1"/>
</dbReference>
<dbReference type="HAMAP" id="MF_00014">
    <property type="entry name" value="Ribosome_mat_RimM"/>
    <property type="match status" value="1"/>
</dbReference>
<dbReference type="InterPro" id="IPR011033">
    <property type="entry name" value="PRC_barrel-like_sf"/>
</dbReference>
<dbReference type="InterPro" id="IPR056792">
    <property type="entry name" value="PRC_RimM"/>
</dbReference>
<dbReference type="InterPro" id="IPR011961">
    <property type="entry name" value="RimM"/>
</dbReference>
<dbReference type="InterPro" id="IPR002676">
    <property type="entry name" value="RimM_N"/>
</dbReference>
<dbReference type="InterPro" id="IPR036976">
    <property type="entry name" value="RimM_N_sf"/>
</dbReference>
<dbReference type="InterPro" id="IPR009000">
    <property type="entry name" value="Transl_B-barrel_sf"/>
</dbReference>
<dbReference type="NCBIfam" id="TIGR02273">
    <property type="entry name" value="16S_RimM"/>
    <property type="match status" value="1"/>
</dbReference>
<dbReference type="PANTHER" id="PTHR33692">
    <property type="entry name" value="RIBOSOME MATURATION FACTOR RIMM"/>
    <property type="match status" value="1"/>
</dbReference>
<dbReference type="PANTHER" id="PTHR33692:SF1">
    <property type="entry name" value="RIBOSOME MATURATION FACTOR RIMM"/>
    <property type="match status" value="1"/>
</dbReference>
<dbReference type="Pfam" id="PF24986">
    <property type="entry name" value="PRC_RimM"/>
    <property type="match status" value="1"/>
</dbReference>
<dbReference type="Pfam" id="PF01782">
    <property type="entry name" value="RimM"/>
    <property type="match status" value="1"/>
</dbReference>
<dbReference type="SUPFAM" id="SSF50346">
    <property type="entry name" value="PRC-barrel domain"/>
    <property type="match status" value="1"/>
</dbReference>
<dbReference type="SUPFAM" id="SSF50447">
    <property type="entry name" value="Translation proteins"/>
    <property type="match status" value="1"/>
</dbReference>
<gene>
    <name evidence="1" type="primary">rimM</name>
    <name type="ordered locus">BCAN_A1959</name>
</gene>
<accession>A9M8Q1</accession>
<keyword id="KW-0143">Chaperone</keyword>
<keyword id="KW-0963">Cytoplasm</keyword>
<keyword id="KW-1185">Reference proteome</keyword>
<keyword id="KW-0690">Ribosome biogenesis</keyword>
<keyword id="KW-0698">rRNA processing</keyword>
<organism>
    <name type="scientific">Brucella canis (strain ATCC 23365 / NCTC 10854 / RM-666)</name>
    <dbReference type="NCBI Taxonomy" id="483179"/>
    <lineage>
        <taxon>Bacteria</taxon>
        <taxon>Pseudomonadati</taxon>
        <taxon>Pseudomonadota</taxon>
        <taxon>Alphaproteobacteria</taxon>
        <taxon>Hyphomicrobiales</taxon>
        <taxon>Brucellaceae</taxon>
        <taxon>Brucella/Ochrobactrum group</taxon>
        <taxon>Brucella</taxon>
    </lineage>
</organism>
<name>RIMM_BRUC2</name>